<comment type="function">
    <text evidence="1">Forms oxaloacetate, a four-carbon dicarboxylic acid source for the tricarboxylic acid cycle.</text>
</comment>
<comment type="catalytic activity">
    <reaction evidence="1">
        <text>oxaloacetate + phosphate = phosphoenolpyruvate + hydrogencarbonate</text>
        <dbReference type="Rhea" id="RHEA:28370"/>
        <dbReference type="ChEBI" id="CHEBI:16452"/>
        <dbReference type="ChEBI" id="CHEBI:17544"/>
        <dbReference type="ChEBI" id="CHEBI:43474"/>
        <dbReference type="ChEBI" id="CHEBI:58702"/>
        <dbReference type="EC" id="4.1.1.31"/>
    </reaction>
</comment>
<comment type="cofactor">
    <cofactor evidence="1">
        <name>Mg(2+)</name>
        <dbReference type="ChEBI" id="CHEBI:18420"/>
    </cofactor>
</comment>
<comment type="similarity">
    <text evidence="1">Belongs to the PEPCase type 1 family.</text>
</comment>
<dbReference type="EC" id="4.1.1.31" evidence="1"/>
<dbReference type="EMBL" id="CP000653">
    <property type="protein sequence ID" value="ABP62685.1"/>
    <property type="molecule type" value="Genomic_DNA"/>
</dbReference>
<dbReference type="RefSeq" id="WP_015960989.1">
    <property type="nucleotide sequence ID" value="NC_009436.1"/>
</dbReference>
<dbReference type="SMR" id="A4WG55"/>
<dbReference type="STRING" id="399742.Ent638_4030"/>
<dbReference type="KEGG" id="ent:Ent638_4030"/>
<dbReference type="eggNOG" id="COG2352">
    <property type="taxonomic scope" value="Bacteria"/>
</dbReference>
<dbReference type="HOGENOM" id="CLU_006557_2_0_6"/>
<dbReference type="OrthoDB" id="9768133at2"/>
<dbReference type="Proteomes" id="UP000000230">
    <property type="component" value="Chromosome"/>
</dbReference>
<dbReference type="GO" id="GO:0005829">
    <property type="term" value="C:cytosol"/>
    <property type="evidence" value="ECO:0007669"/>
    <property type="project" value="TreeGrafter"/>
</dbReference>
<dbReference type="GO" id="GO:0000287">
    <property type="term" value="F:magnesium ion binding"/>
    <property type="evidence" value="ECO:0007669"/>
    <property type="project" value="UniProtKB-UniRule"/>
</dbReference>
<dbReference type="GO" id="GO:0008964">
    <property type="term" value="F:phosphoenolpyruvate carboxylase activity"/>
    <property type="evidence" value="ECO:0007669"/>
    <property type="project" value="UniProtKB-UniRule"/>
</dbReference>
<dbReference type="GO" id="GO:0015977">
    <property type="term" value="P:carbon fixation"/>
    <property type="evidence" value="ECO:0007669"/>
    <property type="project" value="UniProtKB-UniRule"/>
</dbReference>
<dbReference type="GO" id="GO:0006107">
    <property type="term" value="P:oxaloacetate metabolic process"/>
    <property type="evidence" value="ECO:0007669"/>
    <property type="project" value="UniProtKB-UniRule"/>
</dbReference>
<dbReference type="GO" id="GO:0006099">
    <property type="term" value="P:tricarboxylic acid cycle"/>
    <property type="evidence" value="ECO:0007669"/>
    <property type="project" value="InterPro"/>
</dbReference>
<dbReference type="FunFam" id="1.20.1440.90:FF:000002">
    <property type="entry name" value="Phosphoenolpyruvate carboxylase"/>
    <property type="match status" value="1"/>
</dbReference>
<dbReference type="Gene3D" id="1.20.1440.90">
    <property type="entry name" value="Phosphoenolpyruvate/pyruvate domain"/>
    <property type="match status" value="1"/>
</dbReference>
<dbReference type="HAMAP" id="MF_00595">
    <property type="entry name" value="PEPcase_type1"/>
    <property type="match status" value="1"/>
</dbReference>
<dbReference type="InterPro" id="IPR021135">
    <property type="entry name" value="PEP_COase"/>
</dbReference>
<dbReference type="InterPro" id="IPR022805">
    <property type="entry name" value="PEP_COase_bac/pln-type"/>
</dbReference>
<dbReference type="InterPro" id="IPR018129">
    <property type="entry name" value="PEP_COase_Lys_AS"/>
</dbReference>
<dbReference type="InterPro" id="IPR033129">
    <property type="entry name" value="PEPCASE_His_AS"/>
</dbReference>
<dbReference type="InterPro" id="IPR015813">
    <property type="entry name" value="Pyrv/PenolPyrv_kinase-like_dom"/>
</dbReference>
<dbReference type="NCBIfam" id="NF000584">
    <property type="entry name" value="PRK00009.1"/>
    <property type="match status" value="1"/>
</dbReference>
<dbReference type="PANTHER" id="PTHR30523">
    <property type="entry name" value="PHOSPHOENOLPYRUVATE CARBOXYLASE"/>
    <property type="match status" value="1"/>
</dbReference>
<dbReference type="PANTHER" id="PTHR30523:SF6">
    <property type="entry name" value="PHOSPHOENOLPYRUVATE CARBOXYLASE"/>
    <property type="match status" value="1"/>
</dbReference>
<dbReference type="Pfam" id="PF00311">
    <property type="entry name" value="PEPcase"/>
    <property type="match status" value="1"/>
</dbReference>
<dbReference type="PRINTS" id="PR00150">
    <property type="entry name" value="PEPCARBXLASE"/>
</dbReference>
<dbReference type="SUPFAM" id="SSF51621">
    <property type="entry name" value="Phosphoenolpyruvate/pyruvate domain"/>
    <property type="match status" value="1"/>
</dbReference>
<dbReference type="PROSITE" id="PS00781">
    <property type="entry name" value="PEPCASE_1"/>
    <property type="match status" value="1"/>
</dbReference>
<dbReference type="PROSITE" id="PS00393">
    <property type="entry name" value="PEPCASE_2"/>
    <property type="match status" value="1"/>
</dbReference>
<name>CAPP_ENT38</name>
<reference key="1">
    <citation type="journal article" date="2010" name="PLoS Genet.">
        <title>Genome sequence of the plant growth promoting endophytic bacterium Enterobacter sp. 638.</title>
        <authorList>
            <person name="Taghavi S."/>
            <person name="van der Lelie D."/>
            <person name="Hoffman A."/>
            <person name="Zhang Y.B."/>
            <person name="Walla M.D."/>
            <person name="Vangronsveld J."/>
            <person name="Newman L."/>
            <person name="Monchy S."/>
        </authorList>
    </citation>
    <scope>NUCLEOTIDE SEQUENCE [LARGE SCALE GENOMIC DNA]</scope>
    <source>
        <strain>638</strain>
    </source>
</reference>
<protein>
    <recommendedName>
        <fullName evidence="1">Phosphoenolpyruvate carboxylase</fullName>
        <shortName evidence="1">PEPC</shortName>
        <shortName evidence="1">PEPCase</shortName>
        <ecNumber evidence="1">4.1.1.31</ecNumber>
    </recommendedName>
</protein>
<evidence type="ECO:0000255" key="1">
    <source>
        <dbReference type="HAMAP-Rule" id="MF_00595"/>
    </source>
</evidence>
<keyword id="KW-0120">Carbon dioxide fixation</keyword>
<keyword id="KW-0456">Lyase</keyword>
<keyword id="KW-0460">Magnesium</keyword>
<proteinExistence type="inferred from homology"/>
<gene>
    <name evidence="1" type="primary">ppc</name>
    <name type="ordered locus">Ent638_4030</name>
</gene>
<feature type="chain" id="PRO_1000061231" description="Phosphoenolpyruvate carboxylase">
    <location>
        <begin position="1"/>
        <end position="883"/>
    </location>
</feature>
<feature type="active site" evidence="1">
    <location>
        <position position="138"/>
    </location>
</feature>
<feature type="active site" evidence="1">
    <location>
        <position position="546"/>
    </location>
</feature>
<accession>A4WG55</accession>
<organism>
    <name type="scientific">Enterobacter sp. (strain 638)</name>
    <dbReference type="NCBI Taxonomy" id="399742"/>
    <lineage>
        <taxon>Bacteria</taxon>
        <taxon>Pseudomonadati</taxon>
        <taxon>Pseudomonadota</taxon>
        <taxon>Gammaproteobacteria</taxon>
        <taxon>Enterobacterales</taxon>
        <taxon>Enterobacteriaceae</taxon>
        <taxon>Enterobacter</taxon>
    </lineage>
</organism>
<sequence length="883" mass="98955">MNEQYSALRSNVSMLGKVLGDTIKDALGETILDRVETIRKLSKSSRAGNEANRQELLTTLQNLSNDELLPVARAFSQFLNLANTAEQYHSISPKGEGASNPEVIARTLRKLKDQPELNEETIKKAVESLSLELVLTAHPTEITRRTLIHKMGEVNSCLKQLDNKDIVDYERNQLMRRLRQLIAQSWHTDEIRKYRPSPVDEAKWGFAVVENSLWEGVPNYLRELNEQLEENLGYRLPVDFVPVRFTSWMGGDRDGNPNVTAEITRHVLLLSRWKATDLFLKDIQILISELSMVEATPELLELVGEAGATEPYRFLLKGLRGQLMATQAWLEARLKGQRLPKPAGLLSQNEQLWDPLYACYKSLQACGMGIIANGELLDTLRRVKCFGVPLVRIDVRQESTRHTEALGELTRYLGIGDYESWSEADKQAFLIRELNSKRPLLPRSWEPSEETSEVLNTCKAIVDAPKGSVAAYVISMAKTPSDVLAVHLLLKEAGISFALPVAPLFETLDDLNNANDVMTQLLNIDWYRGFIQGKQMVMIGYSDSAKDAGVMAASWAQYQAQDALIKTCEKAGIELTLFHGRGGSIGRGGAPAHAALLSQPPGSLKGGLRVTEQGEMIRFKYGLPEVTISSLSLYTSAILEANLLPPPEPKDAWRHIMDELSDISCDLYRGYVRENKDFVPYFRSATPEQELGKLPLGSRPAKRRPTGGVESLRAIPWIFAWTQNRLMLPAWLGAGAALQKVVEDGKQTELETMCRDWPFFSTRLGMLEMVFSKVDLWLAEYYDQRLVKPELWALGKELRELLEGDIKIVLAIANDSHLMADLPWIAESIQLRNIYTDPLNVLQAELLHRSRKAEEEGKEADPRVEQALMVTIAGVAAGMRNTG</sequence>